<keyword id="KW-0963">Cytoplasm</keyword>
<keyword id="KW-0378">Hydrolase</keyword>
<keyword id="KW-0540">Nuclease</keyword>
<keyword id="KW-0690">Ribosome biogenesis</keyword>
<evidence type="ECO:0000255" key="1">
    <source>
        <dbReference type="HAMAP-Rule" id="MF_00651"/>
    </source>
</evidence>
<name>YQGF_PSYWF</name>
<proteinExistence type="inferred from homology"/>
<feature type="chain" id="PRO_1000072692" description="Putative pre-16S rRNA nuclease">
    <location>
        <begin position="1"/>
        <end position="177"/>
    </location>
</feature>
<protein>
    <recommendedName>
        <fullName evidence="1">Putative pre-16S rRNA nuclease</fullName>
        <ecNumber evidence="1">3.1.-.-</ecNumber>
    </recommendedName>
</protein>
<reference key="1">
    <citation type="submission" date="2007-05" db="EMBL/GenBank/DDBJ databases">
        <title>Complete sequence of chromosome of Psychrobacter sp. PRwf-1.</title>
        <authorList>
            <consortium name="US DOE Joint Genome Institute"/>
            <person name="Copeland A."/>
            <person name="Lucas S."/>
            <person name="Lapidus A."/>
            <person name="Barry K."/>
            <person name="Detter J.C."/>
            <person name="Glavina del Rio T."/>
            <person name="Hammon N."/>
            <person name="Israni S."/>
            <person name="Dalin E."/>
            <person name="Tice H."/>
            <person name="Pitluck S."/>
            <person name="Chain P."/>
            <person name="Malfatti S."/>
            <person name="Shin M."/>
            <person name="Vergez L."/>
            <person name="Schmutz J."/>
            <person name="Larimer F."/>
            <person name="Land M."/>
            <person name="Hauser L."/>
            <person name="Kyrpides N."/>
            <person name="Kim E."/>
            <person name="Tiedje J."/>
            <person name="Richardson P."/>
        </authorList>
    </citation>
    <scope>NUCLEOTIDE SEQUENCE [LARGE SCALE GENOMIC DNA]</scope>
    <source>
        <strain>PRwf-1</strain>
    </source>
</reference>
<sequence>MLNDASNKENANSDVAADAAARPEQTVLLGLDYGVKKMGMALGNTVTQDARPFDILAMNNGQPADWDNLLGIIDTWRIGRVVVGLPLNMDGSSSMIAKRAHKFARRLAHRLMEQRIHVPVQLFDERLTSVEAREMAWELGLIKNERDPIDDISACLLLQSYLANPDHAEDIATYKAD</sequence>
<gene>
    <name type="ordered locus">PsycPRwf_0143</name>
</gene>
<accession>A5WBR2</accession>
<organism>
    <name type="scientific">Psychrobacter sp. (strain PRwf-1)</name>
    <dbReference type="NCBI Taxonomy" id="349106"/>
    <lineage>
        <taxon>Bacteria</taxon>
        <taxon>Pseudomonadati</taxon>
        <taxon>Pseudomonadota</taxon>
        <taxon>Gammaproteobacteria</taxon>
        <taxon>Moraxellales</taxon>
        <taxon>Moraxellaceae</taxon>
        <taxon>Psychrobacter</taxon>
    </lineage>
</organism>
<comment type="function">
    <text evidence="1">Could be a nuclease involved in processing of the 5'-end of pre-16S rRNA.</text>
</comment>
<comment type="subcellular location">
    <subcellularLocation>
        <location evidence="1">Cytoplasm</location>
    </subcellularLocation>
</comment>
<comment type="similarity">
    <text evidence="1">Belongs to the YqgF nuclease family.</text>
</comment>
<dbReference type="EC" id="3.1.-.-" evidence="1"/>
<dbReference type="EMBL" id="CP000713">
    <property type="protein sequence ID" value="ABQ93103.1"/>
    <property type="molecule type" value="Genomic_DNA"/>
</dbReference>
<dbReference type="SMR" id="A5WBR2"/>
<dbReference type="STRING" id="349106.PsycPRwf_0143"/>
<dbReference type="KEGG" id="prw:PsycPRwf_0143"/>
<dbReference type="eggNOG" id="COG0816">
    <property type="taxonomic scope" value="Bacteria"/>
</dbReference>
<dbReference type="HOGENOM" id="CLU_098240_3_0_6"/>
<dbReference type="GO" id="GO:0005829">
    <property type="term" value="C:cytosol"/>
    <property type="evidence" value="ECO:0007669"/>
    <property type="project" value="TreeGrafter"/>
</dbReference>
<dbReference type="GO" id="GO:0004518">
    <property type="term" value="F:nuclease activity"/>
    <property type="evidence" value="ECO:0007669"/>
    <property type="project" value="UniProtKB-KW"/>
</dbReference>
<dbReference type="GO" id="GO:0000967">
    <property type="term" value="P:rRNA 5'-end processing"/>
    <property type="evidence" value="ECO:0007669"/>
    <property type="project" value="UniProtKB-UniRule"/>
</dbReference>
<dbReference type="CDD" id="cd16964">
    <property type="entry name" value="YqgF"/>
    <property type="match status" value="1"/>
</dbReference>
<dbReference type="Gene3D" id="3.30.420.140">
    <property type="entry name" value="YqgF/RNase H-like domain"/>
    <property type="match status" value="1"/>
</dbReference>
<dbReference type="HAMAP" id="MF_00651">
    <property type="entry name" value="Nuclease_YqgF"/>
    <property type="match status" value="1"/>
</dbReference>
<dbReference type="InterPro" id="IPR012337">
    <property type="entry name" value="RNaseH-like_sf"/>
</dbReference>
<dbReference type="InterPro" id="IPR005227">
    <property type="entry name" value="YqgF"/>
</dbReference>
<dbReference type="InterPro" id="IPR006641">
    <property type="entry name" value="YqgF/RNaseH-like_dom"/>
</dbReference>
<dbReference type="InterPro" id="IPR037027">
    <property type="entry name" value="YqgF/RNaseH-like_dom_sf"/>
</dbReference>
<dbReference type="NCBIfam" id="TIGR00250">
    <property type="entry name" value="RNAse_H_YqgF"/>
    <property type="match status" value="1"/>
</dbReference>
<dbReference type="PANTHER" id="PTHR33317">
    <property type="entry name" value="POLYNUCLEOTIDYL TRANSFERASE, RIBONUCLEASE H-LIKE SUPERFAMILY PROTEIN"/>
    <property type="match status" value="1"/>
</dbReference>
<dbReference type="PANTHER" id="PTHR33317:SF4">
    <property type="entry name" value="POLYNUCLEOTIDYL TRANSFERASE, RIBONUCLEASE H-LIKE SUPERFAMILY PROTEIN"/>
    <property type="match status" value="1"/>
</dbReference>
<dbReference type="Pfam" id="PF03652">
    <property type="entry name" value="RuvX"/>
    <property type="match status" value="1"/>
</dbReference>
<dbReference type="SMART" id="SM00732">
    <property type="entry name" value="YqgFc"/>
    <property type="match status" value="1"/>
</dbReference>
<dbReference type="SUPFAM" id="SSF53098">
    <property type="entry name" value="Ribonuclease H-like"/>
    <property type="match status" value="1"/>
</dbReference>